<protein>
    <recommendedName>
        <fullName evidence="2">Purine nucleoside phosphorylase DeoD-type 1</fullName>
        <shortName evidence="2">PNP 1</shortName>
        <ecNumber evidence="2">2.4.2.1</ecNumber>
    </recommendedName>
</protein>
<gene>
    <name evidence="2" type="primary">deoD1</name>
    <name type="ordered locus">PBPRA0633</name>
</gene>
<dbReference type="EC" id="2.4.2.1" evidence="2"/>
<dbReference type="EMBL" id="CR378664">
    <property type="protein sequence ID" value="CAG19054.1"/>
    <property type="molecule type" value="Genomic_DNA"/>
</dbReference>
<dbReference type="SMR" id="Q6LUH1"/>
<dbReference type="STRING" id="298386.PBPRA0633"/>
<dbReference type="KEGG" id="ppr:PBPRA0633"/>
<dbReference type="eggNOG" id="COG0813">
    <property type="taxonomic scope" value="Bacteria"/>
</dbReference>
<dbReference type="HOGENOM" id="CLU_068457_2_0_6"/>
<dbReference type="Proteomes" id="UP000000593">
    <property type="component" value="Chromosome 1"/>
</dbReference>
<dbReference type="GO" id="GO:0005829">
    <property type="term" value="C:cytosol"/>
    <property type="evidence" value="ECO:0007669"/>
    <property type="project" value="TreeGrafter"/>
</dbReference>
<dbReference type="GO" id="GO:0004731">
    <property type="term" value="F:purine-nucleoside phosphorylase activity"/>
    <property type="evidence" value="ECO:0007669"/>
    <property type="project" value="UniProtKB-UniRule"/>
</dbReference>
<dbReference type="GO" id="GO:0006152">
    <property type="term" value="P:purine nucleoside catabolic process"/>
    <property type="evidence" value="ECO:0007669"/>
    <property type="project" value="TreeGrafter"/>
</dbReference>
<dbReference type="CDD" id="cd09006">
    <property type="entry name" value="PNP_EcPNPI-like"/>
    <property type="match status" value="1"/>
</dbReference>
<dbReference type="FunFam" id="3.40.50.1580:FF:000002">
    <property type="entry name" value="Purine nucleoside phosphorylase DeoD-type"/>
    <property type="match status" value="1"/>
</dbReference>
<dbReference type="Gene3D" id="3.40.50.1580">
    <property type="entry name" value="Nucleoside phosphorylase domain"/>
    <property type="match status" value="1"/>
</dbReference>
<dbReference type="HAMAP" id="MF_01627">
    <property type="entry name" value="Pur_nucleosid_phosp"/>
    <property type="match status" value="1"/>
</dbReference>
<dbReference type="InterPro" id="IPR004402">
    <property type="entry name" value="DeoD-type"/>
</dbReference>
<dbReference type="InterPro" id="IPR018016">
    <property type="entry name" value="Nucleoside_phosphorylase_CS"/>
</dbReference>
<dbReference type="InterPro" id="IPR000845">
    <property type="entry name" value="Nucleoside_phosphorylase_d"/>
</dbReference>
<dbReference type="InterPro" id="IPR035994">
    <property type="entry name" value="Nucleoside_phosphorylase_sf"/>
</dbReference>
<dbReference type="NCBIfam" id="TIGR00107">
    <property type="entry name" value="deoD"/>
    <property type="match status" value="1"/>
</dbReference>
<dbReference type="NCBIfam" id="NF004489">
    <property type="entry name" value="PRK05819.1"/>
    <property type="match status" value="1"/>
</dbReference>
<dbReference type="NCBIfam" id="NF009914">
    <property type="entry name" value="PRK13374.1"/>
    <property type="match status" value="1"/>
</dbReference>
<dbReference type="PANTHER" id="PTHR43691:SF2">
    <property type="entry name" value="PURINE NUCLEOSIDE PHOSPHORYLASE DEOD-TYPE"/>
    <property type="match status" value="1"/>
</dbReference>
<dbReference type="PANTHER" id="PTHR43691">
    <property type="entry name" value="URIDINE PHOSPHORYLASE"/>
    <property type="match status" value="1"/>
</dbReference>
<dbReference type="Pfam" id="PF01048">
    <property type="entry name" value="PNP_UDP_1"/>
    <property type="match status" value="1"/>
</dbReference>
<dbReference type="SUPFAM" id="SSF53167">
    <property type="entry name" value="Purine and uridine phosphorylases"/>
    <property type="match status" value="1"/>
</dbReference>
<dbReference type="PROSITE" id="PS01232">
    <property type="entry name" value="PNP_UDP_1"/>
    <property type="match status" value="1"/>
</dbReference>
<name>DEOD1_PHOPR</name>
<sequence>MATPHINAEMGDFADVVLMPGDPLRAKYIAETFLQDVKEVCNVRSMFGYTGTYKGRKISVMGHGMGIPSCSIYATELIKDFGVKKIIRVGSCGAVRDDVKLRDVVIGMGASTDSKVNRIRFGGHDFAAIADFGMVQNAVDAAKAKGIPVKVGNIFSADLFYNPDFEFFKTMDKYGIVGVEMEAAGIYGVAAEFGAKALTICTVSDHILRGEATTSEERQLTFNEMMEIALESVLLGDADEA</sequence>
<keyword id="KW-0328">Glycosyltransferase</keyword>
<keyword id="KW-1185">Reference proteome</keyword>
<keyword id="KW-0808">Transferase</keyword>
<feature type="chain" id="PRO_0000063151" description="Purine nucleoside phosphorylase DeoD-type 1">
    <location>
        <begin position="1"/>
        <end position="241"/>
    </location>
</feature>
<feature type="active site" description="Proton donor" evidence="2">
    <location>
        <position position="205"/>
    </location>
</feature>
<feature type="binding site" evidence="1">
    <location>
        <position position="5"/>
    </location>
    <ligand>
        <name>a purine D-ribonucleoside</name>
        <dbReference type="ChEBI" id="CHEBI:142355"/>
        <note>ligand shared between dimeric partners</note>
    </ligand>
</feature>
<feature type="binding site" description="in other chain" evidence="1">
    <location>
        <position position="21"/>
    </location>
    <ligand>
        <name>phosphate</name>
        <dbReference type="ChEBI" id="CHEBI:43474"/>
        <note>ligand shared between dimeric partners</note>
    </ligand>
</feature>
<feature type="binding site" description="in other chain" evidence="1">
    <location>
        <position position="25"/>
    </location>
    <ligand>
        <name>phosphate</name>
        <dbReference type="ChEBI" id="CHEBI:43474"/>
        <note>ligand shared between dimeric partners</note>
    </ligand>
</feature>
<feature type="binding site" evidence="1">
    <location>
        <position position="44"/>
    </location>
    <ligand>
        <name>phosphate</name>
        <dbReference type="ChEBI" id="CHEBI:43474"/>
        <note>ligand shared between dimeric partners</note>
    </ligand>
</feature>
<feature type="binding site" description="in other chain" evidence="1">
    <location>
        <begin position="88"/>
        <end position="91"/>
    </location>
    <ligand>
        <name>phosphate</name>
        <dbReference type="ChEBI" id="CHEBI:43474"/>
        <note>ligand shared between dimeric partners</note>
    </ligand>
</feature>
<feature type="binding site" description="in other chain" evidence="1">
    <location>
        <begin position="180"/>
        <end position="182"/>
    </location>
    <ligand>
        <name>a purine D-ribonucleoside</name>
        <dbReference type="ChEBI" id="CHEBI:142355"/>
        <note>ligand shared between dimeric partners</note>
    </ligand>
</feature>
<feature type="binding site" description="in other chain" evidence="1">
    <location>
        <begin position="204"/>
        <end position="205"/>
    </location>
    <ligand>
        <name>a purine D-ribonucleoside</name>
        <dbReference type="ChEBI" id="CHEBI:142355"/>
        <note>ligand shared between dimeric partners</note>
    </ligand>
</feature>
<feature type="site" description="Important for catalytic activity" evidence="2">
    <location>
        <position position="218"/>
    </location>
</feature>
<organism>
    <name type="scientific">Photobacterium profundum (strain SS9)</name>
    <dbReference type="NCBI Taxonomy" id="298386"/>
    <lineage>
        <taxon>Bacteria</taxon>
        <taxon>Pseudomonadati</taxon>
        <taxon>Pseudomonadota</taxon>
        <taxon>Gammaproteobacteria</taxon>
        <taxon>Vibrionales</taxon>
        <taxon>Vibrionaceae</taxon>
        <taxon>Photobacterium</taxon>
    </lineage>
</organism>
<comment type="function">
    <text evidence="2">Catalyzes the reversible phosphorolytic breakdown of the N-glycosidic bond in the beta-(deoxy)ribonucleoside molecules, with the formation of the corresponding free purine bases and pentose-1-phosphate.</text>
</comment>
<comment type="catalytic activity">
    <reaction evidence="2">
        <text>a purine D-ribonucleoside + phosphate = a purine nucleobase + alpha-D-ribose 1-phosphate</text>
        <dbReference type="Rhea" id="RHEA:19805"/>
        <dbReference type="ChEBI" id="CHEBI:26386"/>
        <dbReference type="ChEBI" id="CHEBI:43474"/>
        <dbReference type="ChEBI" id="CHEBI:57720"/>
        <dbReference type="ChEBI" id="CHEBI:142355"/>
        <dbReference type="EC" id="2.4.2.1"/>
    </reaction>
</comment>
<comment type="catalytic activity">
    <reaction evidence="2">
        <text>a purine 2'-deoxy-D-ribonucleoside + phosphate = a purine nucleobase + 2-deoxy-alpha-D-ribose 1-phosphate</text>
        <dbReference type="Rhea" id="RHEA:36431"/>
        <dbReference type="ChEBI" id="CHEBI:26386"/>
        <dbReference type="ChEBI" id="CHEBI:43474"/>
        <dbReference type="ChEBI" id="CHEBI:57259"/>
        <dbReference type="ChEBI" id="CHEBI:142361"/>
        <dbReference type="EC" id="2.4.2.1"/>
    </reaction>
</comment>
<comment type="subunit">
    <text evidence="2">Homohexamer; trimer of homodimers.</text>
</comment>
<comment type="similarity">
    <text evidence="2">Belongs to the PNP/UDP phosphorylase family.</text>
</comment>
<accession>Q6LUH1</accession>
<evidence type="ECO:0000250" key="1">
    <source>
        <dbReference type="UniProtKB" id="P50389"/>
    </source>
</evidence>
<evidence type="ECO:0000255" key="2">
    <source>
        <dbReference type="HAMAP-Rule" id="MF_01627"/>
    </source>
</evidence>
<proteinExistence type="inferred from homology"/>
<reference key="1">
    <citation type="journal article" date="2005" name="Science">
        <title>Life at depth: Photobacterium profundum genome sequence and expression analysis.</title>
        <authorList>
            <person name="Vezzi A."/>
            <person name="Campanaro S."/>
            <person name="D'Angelo M."/>
            <person name="Simonato F."/>
            <person name="Vitulo N."/>
            <person name="Lauro F.M."/>
            <person name="Cestaro A."/>
            <person name="Malacrida G."/>
            <person name="Simionati B."/>
            <person name="Cannata N."/>
            <person name="Romualdi C."/>
            <person name="Bartlett D.H."/>
            <person name="Valle G."/>
        </authorList>
    </citation>
    <scope>NUCLEOTIDE SEQUENCE [LARGE SCALE GENOMIC DNA]</scope>
    <source>
        <strain>ATCC BAA-1253 / SS9</strain>
    </source>
</reference>